<sequence>MWGASRGRVAGPTLLGLLLALSVRSGGASKASAGLVTCGSVLKLLNTHHKVRLHSHDIKYGSGSGQQSVTGVEESDDANSYWRIRGGSEGGCPRGLPVRCGQAVRLTHVLTGKNLHTHHFPSPLSNNQEVSAFGEDGEGDDLDLWTVRCSGQHWEREASVRFQHVGTSVFLSVTGEQYGNPIRGQHEVHGMPSANAHNTWKAMEGIFIKPGADLSTGHDEL</sequence>
<evidence type="ECO:0000250" key="1">
    <source>
        <dbReference type="UniProtKB" id="Q9HCN8"/>
    </source>
</evidence>
<evidence type="ECO:0000255" key="2"/>
<evidence type="ECO:0000255" key="3">
    <source>
        <dbReference type="PROSITE-ProRule" id="PRU00131"/>
    </source>
</evidence>
<evidence type="ECO:0000255" key="4">
    <source>
        <dbReference type="PROSITE-ProRule" id="PRU10138"/>
    </source>
</evidence>
<comment type="subcellular location">
    <subcellularLocation>
        <location evidence="4">Endoplasmic reticulum lumen</location>
    </subcellularLocation>
</comment>
<comment type="tissue specificity">
    <text>Ubiquitously expressed with high expression in the testis, ovary, uterus, and low expression in heart and skeletal muscle.</text>
</comment>
<comment type="induction">
    <text>By tunicamycin and a calcium ionophore, A23187.</text>
</comment>
<name>SDF2L_MOUSE</name>
<feature type="signal peptide" evidence="2">
    <location>
        <begin position="1"/>
        <end position="28"/>
    </location>
</feature>
<feature type="chain" id="PRO_0000031958" description="Stromal cell-derived factor 2-like protein 1">
    <location>
        <begin position="29"/>
        <end position="221"/>
    </location>
</feature>
<feature type="domain" description="MIR 1" evidence="3">
    <location>
        <begin position="33"/>
        <end position="87"/>
    </location>
</feature>
<feature type="domain" description="MIR 2" evidence="3">
    <location>
        <begin position="95"/>
        <end position="150"/>
    </location>
</feature>
<feature type="domain" description="MIR 3" evidence="3">
    <location>
        <begin position="151"/>
        <end position="205"/>
    </location>
</feature>
<feature type="short sequence motif" description="Prevents secretion from ER" evidence="4">
    <location>
        <begin position="218"/>
        <end position="221"/>
    </location>
</feature>
<feature type="modified residue" description="Phosphoserine" evidence="1">
    <location>
        <position position="215"/>
    </location>
</feature>
<dbReference type="EMBL" id="AB043006">
    <property type="protein sequence ID" value="BAB18276.1"/>
    <property type="molecule type" value="mRNA"/>
</dbReference>
<dbReference type="EMBL" id="AB043008">
    <property type="protein sequence ID" value="BAB18278.1"/>
    <property type="molecule type" value="Genomic_DNA"/>
</dbReference>
<dbReference type="EMBL" id="BC053425">
    <property type="protein sequence ID" value="AAH53425.1"/>
    <property type="molecule type" value="mRNA"/>
</dbReference>
<dbReference type="CCDS" id="CCDS37270.1"/>
<dbReference type="RefSeq" id="NP_071719.1">
    <property type="nucleotide sequence ID" value="NM_022324.3"/>
</dbReference>
<dbReference type="SMR" id="Q9ESP1"/>
<dbReference type="BioGRID" id="211030">
    <property type="interactions" value="21"/>
</dbReference>
<dbReference type="CORUM" id="Q9ESP1"/>
<dbReference type="FunCoup" id="Q9ESP1">
    <property type="interactions" value="1562"/>
</dbReference>
<dbReference type="STRING" id="10090.ENSMUSP00000023453"/>
<dbReference type="PhosphoSitePlus" id="Q9ESP1"/>
<dbReference type="SwissPalm" id="Q9ESP1"/>
<dbReference type="REPRODUCTION-2DPAGE" id="Q9ESP1"/>
<dbReference type="jPOST" id="Q9ESP1"/>
<dbReference type="PaxDb" id="10090-ENSMUSP00000023453"/>
<dbReference type="PeptideAtlas" id="Q9ESP1"/>
<dbReference type="ProteomicsDB" id="256725"/>
<dbReference type="Pumba" id="Q9ESP1"/>
<dbReference type="TopDownProteomics" id="Q9ESP1"/>
<dbReference type="Antibodypedia" id="217">
    <property type="antibodies" value="95 antibodies from 18 providers"/>
</dbReference>
<dbReference type="DNASU" id="64136"/>
<dbReference type="Ensembl" id="ENSMUST00000023453.10">
    <property type="protein sequence ID" value="ENSMUSP00000023453.8"/>
    <property type="gene ID" value="ENSMUSG00000022769.10"/>
</dbReference>
<dbReference type="GeneID" id="64136"/>
<dbReference type="KEGG" id="mmu:64136"/>
<dbReference type="UCSC" id="uc007ykc.2">
    <property type="organism name" value="mouse"/>
</dbReference>
<dbReference type="AGR" id="MGI:2149842"/>
<dbReference type="CTD" id="23753"/>
<dbReference type="MGI" id="MGI:2149842">
    <property type="gene designation" value="Sdf2l1"/>
</dbReference>
<dbReference type="VEuPathDB" id="HostDB:ENSMUSG00000022769"/>
<dbReference type="eggNOG" id="KOG3358">
    <property type="taxonomic scope" value="Eukaryota"/>
</dbReference>
<dbReference type="GeneTree" id="ENSGT00940000160018"/>
<dbReference type="HOGENOM" id="CLU_078126_1_0_1"/>
<dbReference type="InParanoid" id="Q9ESP1"/>
<dbReference type="OMA" id="KPQHGTR"/>
<dbReference type="OrthoDB" id="5588846at2759"/>
<dbReference type="PhylomeDB" id="Q9ESP1"/>
<dbReference type="TreeFam" id="TF314557"/>
<dbReference type="BioGRID-ORCS" id="64136">
    <property type="hits" value="3 hits in 76 CRISPR screens"/>
</dbReference>
<dbReference type="ChiTaRS" id="Sdf2l1">
    <property type="organism name" value="mouse"/>
</dbReference>
<dbReference type="PRO" id="PR:Q9ESP1"/>
<dbReference type="Proteomes" id="UP000000589">
    <property type="component" value="Chromosome 16"/>
</dbReference>
<dbReference type="RNAct" id="Q9ESP1">
    <property type="molecule type" value="protein"/>
</dbReference>
<dbReference type="Bgee" id="ENSMUSG00000022769">
    <property type="expression patterns" value="Expressed in spermatocyte and 221 other cell types or tissues"/>
</dbReference>
<dbReference type="GO" id="GO:0005783">
    <property type="term" value="C:endoplasmic reticulum"/>
    <property type="evidence" value="ECO:0000247"/>
    <property type="project" value="MGI"/>
</dbReference>
<dbReference type="GO" id="GO:0034663">
    <property type="term" value="C:endoplasmic reticulum chaperone complex"/>
    <property type="evidence" value="ECO:0000314"/>
    <property type="project" value="ParkinsonsUK-UCL"/>
</dbReference>
<dbReference type="GO" id="GO:0005788">
    <property type="term" value="C:endoplasmic reticulum lumen"/>
    <property type="evidence" value="ECO:0007669"/>
    <property type="project" value="UniProtKB-SubCell"/>
</dbReference>
<dbReference type="GO" id="GO:0016020">
    <property type="term" value="C:membrane"/>
    <property type="evidence" value="ECO:0000266"/>
    <property type="project" value="MGI"/>
</dbReference>
<dbReference type="GO" id="GO:0101031">
    <property type="term" value="C:protein folding chaperone complex"/>
    <property type="evidence" value="ECO:0007669"/>
    <property type="project" value="Ensembl"/>
</dbReference>
<dbReference type="GO" id="GO:0051117">
    <property type="term" value="F:ATPase binding"/>
    <property type="evidence" value="ECO:0000266"/>
    <property type="project" value="MGI"/>
</dbReference>
<dbReference type="GO" id="GO:0051787">
    <property type="term" value="F:misfolded protein binding"/>
    <property type="evidence" value="ECO:0000266"/>
    <property type="project" value="MGI"/>
</dbReference>
<dbReference type="GO" id="GO:0051087">
    <property type="term" value="F:protein-folding chaperone binding"/>
    <property type="evidence" value="ECO:0000266"/>
    <property type="project" value="MGI"/>
</dbReference>
<dbReference type="GO" id="GO:0071218">
    <property type="term" value="P:cellular response to misfolded protein"/>
    <property type="evidence" value="ECO:0000266"/>
    <property type="project" value="MGI"/>
</dbReference>
<dbReference type="GO" id="GO:0051085">
    <property type="term" value="P:chaperone cofactor-dependent protein refolding"/>
    <property type="evidence" value="ECO:0007669"/>
    <property type="project" value="Ensembl"/>
</dbReference>
<dbReference type="GO" id="GO:0036503">
    <property type="term" value="P:ERAD pathway"/>
    <property type="evidence" value="ECO:0000266"/>
    <property type="project" value="MGI"/>
</dbReference>
<dbReference type="GO" id="GO:0042981">
    <property type="term" value="P:regulation of apoptotic process"/>
    <property type="evidence" value="ECO:0000266"/>
    <property type="project" value="MGI"/>
</dbReference>
<dbReference type="GO" id="GO:0034976">
    <property type="term" value="P:response to endoplasmic reticulum stress"/>
    <property type="evidence" value="ECO:0000266"/>
    <property type="project" value="MGI"/>
</dbReference>
<dbReference type="CDD" id="cd23293">
    <property type="entry name" value="beta-trefoil_MIR_SDF2_meta"/>
    <property type="match status" value="1"/>
</dbReference>
<dbReference type="FunFam" id="2.80.10.50:FF:000023">
    <property type="entry name" value="Stromal cell-derived factor 2-like 1"/>
    <property type="match status" value="1"/>
</dbReference>
<dbReference type="Gene3D" id="2.80.10.50">
    <property type="match status" value="1"/>
</dbReference>
<dbReference type="InterPro" id="IPR036300">
    <property type="entry name" value="MIR_dom_sf"/>
</dbReference>
<dbReference type="InterPro" id="IPR016093">
    <property type="entry name" value="MIR_motif"/>
</dbReference>
<dbReference type="PANTHER" id="PTHR46809">
    <property type="entry name" value="STROMAL CELL-DERIVED FACTOR 2-LIKE PROTEIN"/>
    <property type="match status" value="1"/>
</dbReference>
<dbReference type="PANTHER" id="PTHR46809:SF1">
    <property type="entry name" value="STROMAL CELL-DERIVED FACTOR 2-LIKE PROTEIN 1"/>
    <property type="match status" value="1"/>
</dbReference>
<dbReference type="Pfam" id="PF02815">
    <property type="entry name" value="MIR"/>
    <property type="match status" value="1"/>
</dbReference>
<dbReference type="SMART" id="SM00472">
    <property type="entry name" value="MIR"/>
    <property type="match status" value="3"/>
</dbReference>
<dbReference type="SUPFAM" id="SSF82109">
    <property type="entry name" value="MIR domain"/>
    <property type="match status" value="1"/>
</dbReference>
<dbReference type="PROSITE" id="PS00014">
    <property type="entry name" value="ER_TARGET"/>
    <property type="match status" value="1"/>
</dbReference>
<dbReference type="PROSITE" id="PS50919">
    <property type="entry name" value="MIR"/>
    <property type="match status" value="3"/>
</dbReference>
<organism>
    <name type="scientific">Mus musculus</name>
    <name type="common">Mouse</name>
    <dbReference type="NCBI Taxonomy" id="10090"/>
    <lineage>
        <taxon>Eukaryota</taxon>
        <taxon>Metazoa</taxon>
        <taxon>Chordata</taxon>
        <taxon>Craniata</taxon>
        <taxon>Vertebrata</taxon>
        <taxon>Euteleostomi</taxon>
        <taxon>Mammalia</taxon>
        <taxon>Eutheria</taxon>
        <taxon>Euarchontoglires</taxon>
        <taxon>Glires</taxon>
        <taxon>Rodentia</taxon>
        <taxon>Myomorpha</taxon>
        <taxon>Muroidea</taxon>
        <taxon>Muridae</taxon>
        <taxon>Murinae</taxon>
        <taxon>Mus</taxon>
        <taxon>Mus</taxon>
    </lineage>
</organism>
<keyword id="KW-0256">Endoplasmic reticulum</keyword>
<keyword id="KW-0597">Phosphoprotein</keyword>
<keyword id="KW-1185">Reference proteome</keyword>
<keyword id="KW-0677">Repeat</keyword>
<keyword id="KW-0732">Signal</keyword>
<protein>
    <recommendedName>
        <fullName>Stromal cell-derived factor 2-like protein 1</fullName>
        <shortName>SDF2-like protein 1</shortName>
    </recommendedName>
</protein>
<proteinExistence type="evidence at protein level"/>
<accession>Q9ESP1</accession>
<accession>Q9ESP2</accession>
<gene>
    <name type="primary">Sdf2l1</name>
</gene>
<reference key="1">
    <citation type="journal article" date="2001" name="Biochem. Biophys. Res. Commun.">
        <title>Murine and human SDF2L1 is an endoplasmic reticulum stress-inducible gene and encodes a new member of the Pmt/rt protein family.</title>
        <authorList>
            <person name="Fukuda S."/>
            <person name="Sumii M."/>
            <person name="Masuda Y."/>
            <person name="Takahashi M."/>
            <person name="Koike N."/>
            <person name="Teishima J."/>
            <person name="Yasumoto H."/>
            <person name="Itamoto T."/>
            <person name="Asahara T."/>
            <person name="Dohi K."/>
            <person name="Kamiya K."/>
        </authorList>
    </citation>
    <scope>NUCLEOTIDE SEQUENCE [GENOMIC DNA / MRNA]</scope>
</reference>
<reference key="2">
    <citation type="journal article" date="2004" name="Genome Res.">
        <title>The status, quality, and expansion of the NIH full-length cDNA project: the Mammalian Gene Collection (MGC).</title>
        <authorList>
            <consortium name="The MGC Project Team"/>
        </authorList>
    </citation>
    <scope>NUCLEOTIDE SEQUENCE [LARGE SCALE MRNA]</scope>
    <source>
        <tissue>Limb</tissue>
    </source>
</reference>
<reference key="3">
    <citation type="journal article" date="2010" name="Cell">
        <title>A tissue-specific atlas of mouse protein phosphorylation and expression.</title>
        <authorList>
            <person name="Huttlin E.L."/>
            <person name="Jedrychowski M.P."/>
            <person name="Elias J.E."/>
            <person name="Goswami T."/>
            <person name="Rad R."/>
            <person name="Beausoleil S.A."/>
            <person name="Villen J."/>
            <person name="Haas W."/>
            <person name="Sowa M.E."/>
            <person name="Gygi S.P."/>
        </authorList>
    </citation>
    <scope>IDENTIFICATION BY MASS SPECTROMETRY [LARGE SCALE ANALYSIS]</scope>
    <source>
        <tissue>Brain</tissue>
        <tissue>Heart</tissue>
        <tissue>Kidney</tissue>
        <tissue>Liver</tissue>
        <tissue>Lung</tissue>
        <tissue>Pancreas</tissue>
        <tissue>Spleen</tissue>
        <tissue>Testis</tissue>
    </source>
</reference>